<accession>Q3KIA5</accession>
<organism>
    <name type="scientific">Pseudomonas fluorescens (strain Pf0-1)</name>
    <dbReference type="NCBI Taxonomy" id="205922"/>
    <lineage>
        <taxon>Bacteria</taxon>
        <taxon>Pseudomonadati</taxon>
        <taxon>Pseudomonadota</taxon>
        <taxon>Gammaproteobacteria</taxon>
        <taxon>Pseudomonadales</taxon>
        <taxon>Pseudomonadaceae</taxon>
        <taxon>Pseudomonas</taxon>
    </lineage>
</organism>
<reference key="1">
    <citation type="journal article" date="2009" name="Genome Biol.">
        <title>Genomic and genetic analyses of diversity and plant interactions of Pseudomonas fluorescens.</title>
        <authorList>
            <person name="Silby M.W."/>
            <person name="Cerdeno-Tarraga A.M."/>
            <person name="Vernikos G.S."/>
            <person name="Giddens S.R."/>
            <person name="Jackson R.W."/>
            <person name="Preston G.M."/>
            <person name="Zhang X.-X."/>
            <person name="Moon C.D."/>
            <person name="Gehrig S.M."/>
            <person name="Godfrey S.A.C."/>
            <person name="Knight C.G."/>
            <person name="Malone J.G."/>
            <person name="Robinson Z."/>
            <person name="Spiers A.J."/>
            <person name="Harris S."/>
            <person name="Challis G.L."/>
            <person name="Yaxley A.M."/>
            <person name="Harris D."/>
            <person name="Seeger K."/>
            <person name="Murphy L."/>
            <person name="Rutter S."/>
            <person name="Squares R."/>
            <person name="Quail M.A."/>
            <person name="Saunders E."/>
            <person name="Mavromatis K."/>
            <person name="Brettin T.S."/>
            <person name="Bentley S.D."/>
            <person name="Hothersall J."/>
            <person name="Stephens E."/>
            <person name="Thomas C.M."/>
            <person name="Parkhill J."/>
            <person name="Levy S.B."/>
            <person name="Rainey P.B."/>
            <person name="Thomson N.R."/>
        </authorList>
    </citation>
    <scope>NUCLEOTIDE SEQUENCE [LARGE SCALE GENOMIC DNA]</scope>
    <source>
        <strain>Pf0-1</strain>
    </source>
</reference>
<protein>
    <recommendedName>
        <fullName evidence="1">Protein RnfH</fullName>
    </recommendedName>
</protein>
<comment type="similarity">
    <text evidence="1">Belongs to the UPF0125 (RnfH) family.</text>
</comment>
<name>RNFH_PSEPF</name>
<proteinExistence type="inferred from homology"/>
<feature type="chain" id="PRO_1000013589" description="Protein RnfH">
    <location>
        <begin position="1"/>
        <end position="104"/>
    </location>
</feature>
<gene>
    <name evidence="1" type="primary">rnfH</name>
    <name type="ordered locus">Pfl01_0758</name>
</gene>
<evidence type="ECO:0000255" key="1">
    <source>
        <dbReference type="HAMAP-Rule" id="MF_00460"/>
    </source>
</evidence>
<dbReference type="EMBL" id="CP000094">
    <property type="protein sequence ID" value="ABA72501.1"/>
    <property type="molecule type" value="Genomic_DNA"/>
</dbReference>
<dbReference type="RefSeq" id="WP_011332390.1">
    <property type="nucleotide sequence ID" value="NC_007492.2"/>
</dbReference>
<dbReference type="SMR" id="Q3KIA5"/>
<dbReference type="KEGG" id="pfo:Pfl01_0758"/>
<dbReference type="eggNOG" id="COG2914">
    <property type="taxonomic scope" value="Bacteria"/>
</dbReference>
<dbReference type="HOGENOM" id="CLU_150721_1_0_6"/>
<dbReference type="Proteomes" id="UP000002704">
    <property type="component" value="Chromosome"/>
</dbReference>
<dbReference type="Gene3D" id="3.10.20.280">
    <property type="entry name" value="RnfH-like"/>
    <property type="match status" value="1"/>
</dbReference>
<dbReference type="HAMAP" id="MF_00460">
    <property type="entry name" value="UPF0125_RnfH"/>
    <property type="match status" value="1"/>
</dbReference>
<dbReference type="InterPro" id="IPR016155">
    <property type="entry name" value="Mopterin_synth/thiamin_S_b"/>
</dbReference>
<dbReference type="InterPro" id="IPR005346">
    <property type="entry name" value="RnfH"/>
</dbReference>
<dbReference type="InterPro" id="IPR037021">
    <property type="entry name" value="RnfH_sf"/>
</dbReference>
<dbReference type="NCBIfam" id="NF002490">
    <property type="entry name" value="PRK01777.1"/>
    <property type="match status" value="1"/>
</dbReference>
<dbReference type="PANTHER" id="PTHR37483">
    <property type="entry name" value="UPF0125 PROTEIN RATB"/>
    <property type="match status" value="1"/>
</dbReference>
<dbReference type="PANTHER" id="PTHR37483:SF1">
    <property type="entry name" value="UPF0125 PROTEIN RATB"/>
    <property type="match status" value="1"/>
</dbReference>
<dbReference type="Pfam" id="PF03658">
    <property type="entry name" value="Ub-RnfH"/>
    <property type="match status" value="1"/>
</dbReference>
<dbReference type="SUPFAM" id="SSF54285">
    <property type="entry name" value="MoaD/ThiS"/>
    <property type="match status" value="1"/>
</dbReference>
<sequence>MVEPVIEIEVVYAAVDRQVLRVISVAEGTTVRAALMASGIDAEFPELDLISCPLGIFGKVIADPDARRVQEGDRIEIYRPLLADPKEVRRLRAAKAAEAKARNQ</sequence>